<sequence>MVSKVALLLAVLVCSQYMAQGVYVVSKAEWGGRGAKWTVGLGNYLSYAIIHHTAGSYCETRAQCNAVLQSVQNYHMDSLGWPDIGYNFLIGGDGNVYEGRGWNNMGAHAAEWNPYSIGISFLGNYNWDTLEPNMISAAQQLLNDAVNRGQLSSGYILYGHRQVSATECPGTHIWNEIRGWSHWSG</sequence>
<organism>
    <name type="scientific">Drosophila melanogaster</name>
    <name type="common">Fruit fly</name>
    <dbReference type="NCBI Taxonomy" id="7227"/>
    <lineage>
        <taxon>Eukaryota</taxon>
        <taxon>Metazoa</taxon>
        <taxon>Ecdysozoa</taxon>
        <taxon>Arthropoda</taxon>
        <taxon>Hexapoda</taxon>
        <taxon>Insecta</taxon>
        <taxon>Pterygota</taxon>
        <taxon>Neoptera</taxon>
        <taxon>Endopterygota</taxon>
        <taxon>Diptera</taxon>
        <taxon>Brachycera</taxon>
        <taxon>Muscomorpha</taxon>
        <taxon>Ephydroidea</taxon>
        <taxon>Drosophilidae</taxon>
        <taxon>Drosophila</taxon>
        <taxon>Sophophora</taxon>
    </lineage>
</organism>
<comment type="function">
    <text evidence="3 4">N-acetylmuramyl-L-alanine amidase involved in innate immunity by degrading bacterial peptidoglycans (PGN) (PubMed:11106397, PubMed:12496260). Plays a scavenger role by digesting biologically active PGN into biologically inactive fragments (PubMed:12496260). Has no direct bacteriolytic activity (PubMed:12496260).</text>
</comment>
<comment type="catalytic activity">
    <reaction evidence="4">
        <text>Hydrolyzes the link between N-acetylmuramoyl residues and L-amino acid residues in certain cell-wall glycopeptides.</text>
        <dbReference type="EC" id="3.5.1.28"/>
    </reaction>
</comment>
<comment type="cofactor">
    <cofactor evidence="7">
        <name>Zn(2+)</name>
        <dbReference type="ChEBI" id="CHEBI:29105"/>
    </cofactor>
</comment>
<comment type="subcellular location">
    <subcellularLocation>
        <location evidence="6">Secreted</location>
    </subcellularLocation>
</comment>
<comment type="tissue specificity">
    <text evidence="3">Constitutively expressed at high level in gut, in addition to the induced expression in fat body.</text>
</comment>
<comment type="induction">
    <text evidence="3">Up-regulated by PGN from B.subtilis.</text>
</comment>
<comment type="similarity">
    <text evidence="6">Belongs to the N-acetylmuramoyl-L-alanine amidase 2 family.</text>
</comment>
<comment type="sequence caution" evidence="6">
    <conflict type="erroneous initiation">
        <sequence resource="EMBL-CDS" id="AAL28193"/>
    </conflict>
    <text>Extended N-terminus.</text>
</comment>
<proteinExistence type="evidence at protein level"/>
<name>SC1B_DROME</name>
<keyword id="KW-1015">Disulfide bond</keyword>
<keyword id="KW-0378">Hydrolase</keyword>
<keyword id="KW-0391">Immunity</keyword>
<keyword id="KW-0399">Innate immunity</keyword>
<keyword id="KW-0479">Metal-binding</keyword>
<keyword id="KW-1185">Reference proteome</keyword>
<keyword id="KW-0964">Secreted</keyword>
<keyword id="KW-0732">Signal</keyword>
<keyword id="KW-0862">Zinc</keyword>
<evidence type="ECO:0000250" key="1">
    <source>
        <dbReference type="UniProtKB" id="Q8INK6"/>
    </source>
</evidence>
<evidence type="ECO:0000255" key="2"/>
<evidence type="ECO:0000269" key="3">
    <source>
    </source>
</evidence>
<evidence type="ECO:0000269" key="4">
    <source>
    </source>
</evidence>
<evidence type="ECO:0000303" key="5">
    <source>
    </source>
</evidence>
<evidence type="ECO:0000305" key="6"/>
<evidence type="ECO:0000305" key="7">
    <source>
    </source>
</evidence>
<evidence type="ECO:0000312" key="8">
    <source>
        <dbReference type="FlyBase" id="FBgn0033327"/>
    </source>
</evidence>
<accession>C0HK99</accession>
<accession>A0A0B4LEX8</accession>
<accession>B5RJ78</accession>
<accession>Q2XY86</accession>
<accession>Q70PU9</accession>
<accession>Q70PV0</accession>
<accession>Q95SQ9</accession>
<accession>Q9V3B7</accession>
<dbReference type="EC" id="3.5.1.28" evidence="4"/>
<dbReference type="EMBL" id="AF207542">
    <property type="protein sequence ID" value="AAG23736.1"/>
    <property type="molecule type" value="mRNA"/>
</dbReference>
<dbReference type="EMBL" id="AE013599">
    <property type="protein sequence ID" value="AAF59052.1"/>
    <property type="molecule type" value="Genomic_DNA"/>
</dbReference>
<dbReference type="EMBL" id="AE013599">
    <property type="protein sequence ID" value="AHN56007.1"/>
    <property type="molecule type" value="Genomic_DNA"/>
</dbReference>
<dbReference type="EMBL" id="AJ556599">
    <property type="protein sequence ID" value="CAD89164.1"/>
    <property type="molecule type" value="Genomic_DNA"/>
</dbReference>
<dbReference type="EMBL" id="AJ556600">
    <property type="protein sequence ID" value="CAD89165.1"/>
    <property type="molecule type" value="Genomic_DNA"/>
</dbReference>
<dbReference type="EMBL" id="AJ556602">
    <property type="protein sequence ID" value="CAD89167.1"/>
    <property type="molecule type" value="Genomic_DNA"/>
</dbReference>
<dbReference type="EMBL" id="AJ556604">
    <property type="protein sequence ID" value="CAD89169.1"/>
    <property type="molecule type" value="Genomic_DNA"/>
</dbReference>
<dbReference type="EMBL" id="AJ556605">
    <property type="protein sequence ID" value="CAD89170.1"/>
    <property type="molecule type" value="Genomic_DNA"/>
</dbReference>
<dbReference type="EMBL" id="AJ556606">
    <property type="protein sequence ID" value="CAD89171.1"/>
    <property type="molecule type" value="Genomic_DNA"/>
</dbReference>
<dbReference type="EMBL" id="AJ556607">
    <property type="protein sequence ID" value="CAD89172.1"/>
    <property type="molecule type" value="Genomic_DNA"/>
</dbReference>
<dbReference type="EMBL" id="AJ556608">
    <property type="protein sequence ID" value="CAD89173.1"/>
    <property type="molecule type" value="Genomic_DNA"/>
</dbReference>
<dbReference type="EMBL" id="AJ556609">
    <property type="protein sequence ID" value="CAD89174.1"/>
    <property type="molecule type" value="Genomic_DNA"/>
</dbReference>
<dbReference type="EMBL" id="AY060645">
    <property type="protein sequence ID" value="AAL28193.2"/>
    <property type="status" value="ALT_INIT"/>
    <property type="molecule type" value="mRNA"/>
</dbReference>
<dbReference type="EMBL" id="BT044352">
    <property type="protein sequence ID" value="ACH92417.2"/>
    <property type="molecule type" value="mRNA"/>
</dbReference>
<dbReference type="RefSeq" id="NP_001286209.1">
    <property type="nucleotide sequence ID" value="NM_001299280.1"/>
</dbReference>
<dbReference type="RefSeq" id="NP_610409.1">
    <property type="nucleotide sequence ID" value="NM_136565.2"/>
</dbReference>
<dbReference type="SMR" id="C0HK99"/>
<dbReference type="FunCoup" id="C0HK99">
    <property type="interactions" value="94"/>
</dbReference>
<dbReference type="DNASU" id="35861"/>
<dbReference type="EnsemblMetazoa" id="FBtr0088707">
    <property type="protein sequence ID" value="FBpp0087786"/>
    <property type="gene ID" value="FBgn0043576"/>
</dbReference>
<dbReference type="EnsemblMetazoa" id="FBtr0088708">
    <property type="protein sequence ID" value="FBpp0087787"/>
    <property type="gene ID" value="FBgn0033327"/>
</dbReference>
<dbReference type="EnsemblMetazoa" id="FBtr0339336">
    <property type="protein sequence ID" value="FBpp0308436"/>
    <property type="gene ID" value="FBgn0033327"/>
</dbReference>
<dbReference type="GeneID" id="35861"/>
<dbReference type="KEGG" id="dme:Dmel_CG14746"/>
<dbReference type="KEGG" id="dme:Dmel_CG8577"/>
<dbReference type="AGR" id="FB:FBgn0033327"/>
<dbReference type="CTD" id="35859"/>
<dbReference type="CTD" id="35861"/>
<dbReference type="FlyBase" id="FBgn0033327">
    <property type="gene designation" value="PGRP-SC1b"/>
</dbReference>
<dbReference type="VEuPathDB" id="VectorBase:FBgn0033327"/>
<dbReference type="VEuPathDB" id="VectorBase:FBgn0043576"/>
<dbReference type="GeneTree" id="ENSGT00940000166535"/>
<dbReference type="InParanoid" id="C0HK99"/>
<dbReference type="OMA" id="ICTEGRF"/>
<dbReference type="OrthoDB" id="6151684at2759"/>
<dbReference type="BioGRID-ORCS" id="35859">
    <property type="hits" value="0 hits in 3 CRISPR screens"/>
</dbReference>
<dbReference type="BioGRID-ORCS" id="35861">
    <property type="hits" value="0 hits in 3 CRISPR screens"/>
</dbReference>
<dbReference type="PRO" id="PR:C0HK99"/>
<dbReference type="Proteomes" id="UP000000803">
    <property type="component" value="Chromosome 2R"/>
</dbReference>
<dbReference type="Bgee" id="FBgn0033327">
    <property type="expression patterns" value="Expressed in midgut large flat cell (Drosophila) in digestive tract and 7 other cell types or tissues"/>
</dbReference>
<dbReference type="ExpressionAtlas" id="C0HK99">
    <property type="expression patterns" value="baseline and differential"/>
</dbReference>
<dbReference type="GO" id="GO:0005576">
    <property type="term" value="C:extracellular region"/>
    <property type="evidence" value="ECO:0000250"/>
    <property type="project" value="FlyBase"/>
</dbReference>
<dbReference type="GO" id="GO:0008745">
    <property type="term" value="F:N-acetylmuramoyl-L-alanine amidase activity"/>
    <property type="evidence" value="ECO:0000314"/>
    <property type="project" value="FlyBase"/>
</dbReference>
<dbReference type="GO" id="GO:0042834">
    <property type="term" value="F:peptidoglycan binding"/>
    <property type="evidence" value="ECO:0007669"/>
    <property type="project" value="InterPro"/>
</dbReference>
<dbReference type="GO" id="GO:0008270">
    <property type="term" value="F:zinc ion binding"/>
    <property type="evidence" value="ECO:0007669"/>
    <property type="project" value="InterPro"/>
</dbReference>
<dbReference type="GO" id="GO:0045087">
    <property type="term" value="P:innate immune response"/>
    <property type="evidence" value="ECO:0000304"/>
    <property type="project" value="FlyBase"/>
</dbReference>
<dbReference type="GO" id="GO:0002814">
    <property type="term" value="P:negative regulation of biosynthetic process of antibacterial peptides active against Gram-negative bacteria"/>
    <property type="evidence" value="ECO:0000316"/>
    <property type="project" value="FlyBase"/>
</dbReference>
<dbReference type="GO" id="GO:0061060">
    <property type="term" value="P:negative regulation of peptidoglycan recognition protein signaling pathway"/>
    <property type="evidence" value="ECO:0000314"/>
    <property type="project" value="FlyBase"/>
</dbReference>
<dbReference type="GO" id="GO:0009253">
    <property type="term" value="P:peptidoglycan catabolic process"/>
    <property type="evidence" value="ECO:0000314"/>
    <property type="project" value="FlyBase"/>
</dbReference>
<dbReference type="GO" id="GO:0160032">
    <property type="term" value="P:Toll receptor ligand protein activation cascade"/>
    <property type="evidence" value="ECO:0000315"/>
    <property type="project" value="FlyBase"/>
</dbReference>
<dbReference type="CDD" id="cd06583">
    <property type="entry name" value="PGRP"/>
    <property type="match status" value="1"/>
</dbReference>
<dbReference type="FunFam" id="3.40.80.10:FF:000001">
    <property type="entry name" value="Peptidoglycan recognition protein 1"/>
    <property type="match status" value="1"/>
</dbReference>
<dbReference type="Gene3D" id="3.40.80.10">
    <property type="entry name" value="Peptidoglycan recognition protein-like"/>
    <property type="match status" value="1"/>
</dbReference>
<dbReference type="InterPro" id="IPR036505">
    <property type="entry name" value="Amidase/PGRP_sf"/>
</dbReference>
<dbReference type="InterPro" id="IPR002502">
    <property type="entry name" value="Amidase_domain"/>
</dbReference>
<dbReference type="InterPro" id="IPR017331">
    <property type="entry name" value="Peptidoglycan_recognition"/>
</dbReference>
<dbReference type="InterPro" id="IPR015510">
    <property type="entry name" value="PGRP"/>
</dbReference>
<dbReference type="InterPro" id="IPR006619">
    <property type="entry name" value="PGRP_domain_met/bac"/>
</dbReference>
<dbReference type="PANTHER" id="PTHR11022">
    <property type="entry name" value="PEPTIDOGLYCAN RECOGNITION PROTEIN"/>
    <property type="match status" value="1"/>
</dbReference>
<dbReference type="PANTHER" id="PTHR11022:SF75">
    <property type="entry name" value="PEPTIDOGLYCAN-RECOGNITION PROTEIN SB1-RELATED"/>
    <property type="match status" value="1"/>
</dbReference>
<dbReference type="Pfam" id="PF01510">
    <property type="entry name" value="Amidase_2"/>
    <property type="match status" value="1"/>
</dbReference>
<dbReference type="PIRSF" id="PIRSF037945">
    <property type="entry name" value="PGRPs"/>
    <property type="match status" value="1"/>
</dbReference>
<dbReference type="SMART" id="SM00644">
    <property type="entry name" value="Ami_2"/>
    <property type="match status" value="1"/>
</dbReference>
<dbReference type="SMART" id="SM00701">
    <property type="entry name" value="PGRP"/>
    <property type="match status" value="1"/>
</dbReference>
<dbReference type="SUPFAM" id="SSF55846">
    <property type="entry name" value="N-acetylmuramoyl-L-alanine amidase-like"/>
    <property type="match status" value="1"/>
</dbReference>
<protein>
    <recommendedName>
        <fullName evidence="5">Peptidoglycan-recognition protein SC1b</fullName>
        <ecNumber evidence="4">3.5.1.28</ecNumber>
    </recommendedName>
</protein>
<gene>
    <name evidence="5 8" type="primary">PGRP-SC1b</name>
    <name evidence="8" type="ORF">CG8577</name>
</gene>
<feature type="signal peptide" evidence="2">
    <location>
        <begin position="1"/>
        <end position="21"/>
    </location>
</feature>
<feature type="chain" id="PRO_0000438897" description="Peptidoglycan-recognition protein SC1b">
    <location>
        <begin position="22"/>
        <end position="185"/>
    </location>
</feature>
<feature type="domain" description="N-acetylmuramoyl-L-alanine amidase" evidence="2">
    <location>
        <begin position="46"/>
        <end position="170"/>
    </location>
</feature>
<feature type="binding site" evidence="1">
    <location>
        <position position="51"/>
    </location>
    <ligand>
        <name>Zn(2+)</name>
        <dbReference type="ChEBI" id="CHEBI:29105"/>
    </ligand>
</feature>
<feature type="binding site" evidence="1">
    <location>
        <position position="160"/>
    </location>
    <ligand>
        <name>Zn(2+)</name>
        <dbReference type="ChEBI" id="CHEBI:29105"/>
    </ligand>
</feature>
<feature type="binding site" evidence="7">
    <location>
        <position position="168"/>
    </location>
    <ligand>
        <name>Zn(2+)</name>
        <dbReference type="ChEBI" id="CHEBI:29105"/>
    </ligand>
</feature>
<feature type="site" description="Essential for zinc hydrate coordination" evidence="1">
    <location>
        <position position="86"/>
    </location>
</feature>
<feature type="disulfide bond" evidence="1">
    <location>
        <begin position="58"/>
        <end position="64"/>
    </location>
</feature>
<feature type="sequence variant" description="In strain: KY038.">
    <original>A</original>
    <variation>T</variation>
    <location>
        <position position="6"/>
    </location>
</feature>
<feature type="mutagenesis site" description="Abolishes enzyme activity but retains PGN-binding." evidence="4">
    <original>C</original>
    <variation>A</variation>
    <location>
        <position position="168"/>
    </location>
</feature>
<feature type="sequence conflict" description="In Ref. 5; AAL28193." evidence="6" ref="5">
    <original>R</original>
    <variation>P</variation>
    <location>
        <position position="178"/>
    </location>
</feature>
<reference key="1">
    <citation type="journal article" date="2000" name="Proc. Natl. Acad. Sci. U.S.A.">
        <title>A family of peptidoglycan recognition proteins in the fruit fly Drosophila melanogaster.</title>
        <authorList>
            <person name="Werner T."/>
            <person name="Liu G."/>
            <person name="Kang D."/>
            <person name="Ekengren S."/>
            <person name="Steiner H."/>
            <person name="Hultmark D."/>
        </authorList>
    </citation>
    <scope>NUCLEOTIDE SEQUENCE [MRNA]</scope>
    <scope>FUNCTION</scope>
    <scope>PGN-BINDING</scope>
    <scope>TISSUE SPECIFICITY</scope>
    <scope>INDUCTION</scope>
</reference>
<reference key="2">
    <citation type="journal article" date="2003" name="J. Mol. Evol.">
        <title>The evolution of parasite recognition genes in the innate immune system: purifying selection on Drosophila melanogaster peptidoglycan recognition proteins.</title>
        <authorList>
            <person name="Jiggins F.M."/>
            <person name="Hurst G.D.D."/>
        </authorList>
    </citation>
    <scope>NUCLEOTIDE SEQUENCE [GENOMIC DNA]</scope>
    <source>
        <strain>DI7</strain>
        <strain>Draveil</strain>
        <strain>KY038</strain>
        <strain>Loua</strain>
        <strain>P.bourg</strain>
        <strain>S14</strain>
        <strain>S30</strain>
        <strain>Tahiti</strain>
        <strain>Texas</strain>
    </source>
</reference>
<reference key="3">
    <citation type="journal article" date="2000" name="Science">
        <title>The genome sequence of Drosophila melanogaster.</title>
        <authorList>
            <person name="Adams M.D."/>
            <person name="Celniker S.E."/>
            <person name="Holt R.A."/>
            <person name="Evans C.A."/>
            <person name="Gocayne J.D."/>
            <person name="Amanatides P.G."/>
            <person name="Scherer S.E."/>
            <person name="Li P.W."/>
            <person name="Hoskins R.A."/>
            <person name="Galle R.F."/>
            <person name="George R.A."/>
            <person name="Lewis S.E."/>
            <person name="Richards S."/>
            <person name="Ashburner M."/>
            <person name="Henderson S.N."/>
            <person name="Sutton G.G."/>
            <person name="Wortman J.R."/>
            <person name="Yandell M.D."/>
            <person name="Zhang Q."/>
            <person name="Chen L.X."/>
            <person name="Brandon R.C."/>
            <person name="Rogers Y.-H.C."/>
            <person name="Blazej R.G."/>
            <person name="Champe M."/>
            <person name="Pfeiffer B.D."/>
            <person name="Wan K.H."/>
            <person name="Doyle C."/>
            <person name="Baxter E.G."/>
            <person name="Helt G."/>
            <person name="Nelson C.R."/>
            <person name="Miklos G.L.G."/>
            <person name="Abril J.F."/>
            <person name="Agbayani A."/>
            <person name="An H.-J."/>
            <person name="Andrews-Pfannkoch C."/>
            <person name="Baldwin D."/>
            <person name="Ballew R.M."/>
            <person name="Basu A."/>
            <person name="Baxendale J."/>
            <person name="Bayraktaroglu L."/>
            <person name="Beasley E.M."/>
            <person name="Beeson K.Y."/>
            <person name="Benos P.V."/>
            <person name="Berman B.P."/>
            <person name="Bhandari D."/>
            <person name="Bolshakov S."/>
            <person name="Borkova D."/>
            <person name="Botchan M.R."/>
            <person name="Bouck J."/>
            <person name="Brokstein P."/>
            <person name="Brottier P."/>
            <person name="Burtis K.C."/>
            <person name="Busam D.A."/>
            <person name="Butler H."/>
            <person name="Cadieu E."/>
            <person name="Center A."/>
            <person name="Chandra I."/>
            <person name="Cherry J.M."/>
            <person name="Cawley S."/>
            <person name="Dahlke C."/>
            <person name="Davenport L.B."/>
            <person name="Davies P."/>
            <person name="de Pablos B."/>
            <person name="Delcher A."/>
            <person name="Deng Z."/>
            <person name="Mays A.D."/>
            <person name="Dew I."/>
            <person name="Dietz S.M."/>
            <person name="Dodson K."/>
            <person name="Doup L.E."/>
            <person name="Downes M."/>
            <person name="Dugan-Rocha S."/>
            <person name="Dunkov B.C."/>
            <person name="Dunn P."/>
            <person name="Durbin K.J."/>
            <person name="Evangelista C.C."/>
            <person name="Ferraz C."/>
            <person name="Ferriera S."/>
            <person name="Fleischmann W."/>
            <person name="Fosler C."/>
            <person name="Gabrielian A.E."/>
            <person name="Garg N.S."/>
            <person name="Gelbart W.M."/>
            <person name="Glasser K."/>
            <person name="Glodek A."/>
            <person name="Gong F."/>
            <person name="Gorrell J.H."/>
            <person name="Gu Z."/>
            <person name="Guan P."/>
            <person name="Harris M."/>
            <person name="Harris N.L."/>
            <person name="Harvey D.A."/>
            <person name="Heiman T.J."/>
            <person name="Hernandez J.R."/>
            <person name="Houck J."/>
            <person name="Hostin D."/>
            <person name="Houston K.A."/>
            <person name="Howland T.J."/>
            <person name="Wei M.-H."/>
            <person name="Ibegwam C."/>
            <person name="Jalali M."/>
            <person name="Kalush F."/>
            <person name="Karpen G.H."/>
            <person name="Ke Z."/>
            <person name="Kennison J.A."/>
            <person name="Ketchum K.A."/>
            <person name="Kimmel B.E."/>
            <person name="Kodira C.D."/>
            <person name="Kraft C.L."/>
            <person name="Kravitz S."/>
            <person name="Kulp D."/>
            <person name="Lai Z."/>
            <person name="Lasko P."/>
            <person name="Lei Y."/>
            <person name="Levitsky A.A."/>
            <person name="Li J.H."/>
            <person name="Li Z."/>
            <person name="Liang Y."/>
            <person name="Lin X."/>
            <person name="Liu X."/>
            <person name="Mattei B."/>
            <person name="McIntosh T.C."/>
            <person name="McLeod M.P."/>
            <person name="McPherson D."/>
            <person name="Merkulov G."/>
            <person name="Milshina N.V."/>
            <person name="Mobarry C."/>
            <person name="Morris J."/>
            <person name="Moshrefi A."/>
            <person name="Mount S.M."/>
            <person name="Moy M."/>
            <person name="Murphy B."/>
            <person name="Murphy L."/>
            <person name="Muzny D.M."/>
            <person name="Nelson D.L."/>
            <person name="Nelson D.R."/>
            <person name="Nelson K.A."/>
            <person name="Nixon K."/>
            <person name="Nusskern D.R."/>
            <person name="Pacleb J.M."/>
            <person name="Palazzolo M."/>
            <person name="Pittman G.S."/>
            <person name="Pan S."/>
            <person name="Pollard J."/>
            <person name="Puri V."/>
            <person name="Reese M.G."/>
            <person name="Reinert K."/>
            <person name="Remington K."/>
            <person name="Saunders R.D.C."/>
            <person name="Scheeler F."/>
            <person name="Shen H."/>
            <person name="Shue B.C."/>
            <person name="Siden-Kiamos I."/>
            <person name="Simpson M."/>
            <person name="Skupski M.P."/>
            <person name="Smith T.J."/>
            <person name="Spier E."/>
            <person name="Spradling A.C."/>
            <person name="Stapleton M."/>
            <person name="Strong R."/>
            <person name="Sun E."/>
            <person name="Svirskas R."/>
            <person name="Tector C."/>
            <person name="Turner R."/>
            <person name="Venter E."/>
            <person name="Wang A.H."/>
            <person name="Wang X."/>
            <person name="Wang Z.-Y."/>
            <person name="Wassarman D.A."/>
            <person name="Weinstock G.M."/>
            <person name="Weissenbach J."/>
            <person name="Williams S.M."/>
            <person name="Woodage T."/>
            <person name="Worley K.C."/>
            <person name="Wu D."/>
            <person name="Yang S."/>
            <person name="Yao Q.A."/>
            <person name="Ye J."/>
            <person name="Yeh R.-F."/>
            <person name="Zaveri J.S."/>
            <person name="Zhan M."/>
            <person name="Zhang G."/>
            <person name="Zhao Q."/>
            <person name="Zheng L."/>
            <person name="Zheng X.H."/>
            <person name="Zhong F.N."/>
            <person name="Zhong W."/>
            <person name="Zhou X."/>
            <person name="Zhu S.C."/>
            <person name="Zhu X."/>
            <person name="Smith H.O."/>
            <person name="Gibbs R.A."/>
            <person name="Myers E.W."/>
            <person name="Rubin G.M."/>
            <person name="Venter J.C."/>
        </authorList>
    </citation>
    <scope>NUCLEOTIDE SEQUENCE [LARGE SCALE GENOMIC DNA]</scope>
    <source>
        <strain>Berkeley</strain>
    </source>
</reference>
<reference key="4">
    <citation type="journal article" date="2002" name="Genome Biol.">
        <title>Annotation of the Drosophila melanogaster euchromatic genome: a systematic review.</title>
        <authorList>
            <person name="Misra S."/>
            <person name="Crosby M.A."/>
            <person name="Mungall C.J."/>
            <person name="Matthews B.B."/>
            <person name="Campbell K.S."/>
            <person name="Hradecky P."/>
            <person name="Huang Y."/>
            <person name="Kaminker J.S."/>
            <person name="Millburn G.H."/>
            <person name="Prochnik S.E."/>
            <person name="Smith C.D."/>
            <person name="Tupy J.L."/>
            <person name="Whitfield E.J."/>
            <person name="Bayraktaroglu L."/>
            <person name="Berman B.P."/>
            <person name="Bettencourt B.R."/>
            <person name="Celniker S.E."/>
            <person name="de Grey A.D.N.J."/>
            <person name="Drysdale R.A."/>
            <person name="Harris N.L."/>
            <person name="Richter J."/>
            <person name="Russo S."/>
            <person name="Schroeder A.J."/>
            <person name="Shu S.Q."/>
            <person name="Stapleton M."/>
            <person name="Yamada C."/>
            <person name="Ashburner M."/>
            <person name="Gelbart W.M."/>
            <person name="Rubin G.M."/>
            <person name="Lewis S.E."/>
        </authorList>
    </citation>
    <scope>GENOME REANNOTATION</scope>
    <source>
        <strain>Berkeley</strain>
    </source>
</reference>
<reference key="5">
    <citation type="journal article" date="2002" name="Genome Biol.">
        <title>A Drosophila full-length cDNA resource.</title>
        <authorList>
            <person name="Stapleton M."/>
            <person name="Carlson J.W."/>
            <person name="Brokstein P."/>
            <person name="Yu C."/>
            <person name="Champe M."/>
            <person name="George R.A."/>
            <person name="Guarin H."/>
            <person name="Kronmiller B."/>
            <person name="Pacleb J.M."/>
            <person name="Park S."/>
            <person name="Wan K.H."/>
            <person name="Rubin G.M."/>
            <person name="Celniker S.E."/>
        </authorList>
    </citation>
    <scope>NUCLEOTIDE SEQUENCE [LARGE SCALE MRNA]</scope>
    <source>
        <strain>Berkeley</strain>
        <tissue>Head</tissue>
    </source>
</reference>
<reference key="6">
    <citation type="submission" date="2011-04" db="EMBL/GenBank/DDBJ databases">
        <authorList>
            <person name="Carlson J.W."/>
            <person name="Booth B."/>
            <person name="Frise E."/>
            <person name="Park S."/>
            <person name="Wan K.H."/>
            <person name="Yu C."/>
            <person name="Celniker S.E."/>
        </authorList>
    </citation>
    <scope>NUCLEOTIDE SEQUENCE [LARGE SCALE MRNA]</scope>
    <source>
        <strain>Berkeley</strain>
        <tissue>Head</tissue>
    </source>
</reference>
<reference key="7">
    <citation type="journal article" date="2003" name="J. Biol. Chem.">
        <title>A scavenger function for a Drosophila peptidoglycan recognition protein.</title>
        <authorList>
            <person name="Mellroth P."/>
            <person name="Karlsson J."/>
            <person name="Steiner H."/>
        </authorList>
    </citation>
    <scope>FUNCTION</scope>
    <scope>ENZYME ACTIVITY</scope>
    <scope>COFACTOR</scope>
    <scope>PGN-BINDING</scope>
    <scope>MUTAGENESIS OF CYS-168</scope>
</reference>